<name>ALBA2_PLAF7</name>
<protein>
    <recommendedName>
        <fullName evidence="4">DNA/RNA-binding protein ALBA2</fullName>
        <shortName evidence="3">PfAlba2</shortName>
    </recommendedName>
</protein>
<sequence length="211" mass="24984">MPGSTKSDTKLENEIRISYKSDALDYVYKAIVLFETYDEIILSGVGKAISSVVNVAEMVKRRAKGLHQFTKLYEKEHVIKREDNSGLKKNAKNEDKKSGDEEEEEEEEEEDEENNKNKEANNRTVEFITTVPCMKIILSKNEDKIDKNEIGYQKPLDEKEVNVMTPEQILKEKSYRRRYRRGGRGGDRFRSYRRNYYETSMWNNRRYEKRN</sequence>
<proteinExistence type="evidence at protein level"/>
<organism evidence="6">
    <name type="scientific">Plasmodium falciparum (isolate 3D7)</name>
    <dbReference type="NCBI Taxonomy" id="36329"/>
    <lineage>
        <taxon>Eukaryota</taxon>
        <taxon>Sar</taxon>
        <taxon>Alveolata</taxon>
        <taxon>Apicomplexa</taxon>
        <taxon>Aconoidasida</taxon>
        <taxon>Haemosporida</taxon>
        <taxon>Plasmodiidae</taxon>
        <taxon>Plasmodium</taxon>
        <taxon>Plasmodium (Laverania)</taxon>
    </lineage>
</organism>
<accession>Q8IDN4</accession>
<keyword id="KW-0158">Chromosome</keyword>
<keyword id="KW-0963">Cytoplasm</keyword>
<keyword id="KW-0238">DNA-binding</keyword>
<keyword id="KW-0539">Nucleus</keyword>
<keyword id="KW-1185">Reference proteome</keyword>
<keyword id="KW-0694">RNA-binding</keyword>
<keyword id="KW-0779">Telomere</keyword>
<reference evidence="6" key="1">
    <citation type="journal article" date="2002" name="Nature">
        <title>Genome sequence of the human malaria parasite Plasmodium falciparum.</title>
        <authorList>
            <person name="Gardner M.J."/>
            <person name="Hall N."/>
            <person name="Fung E."/>
            <person name="White O."/>
            <person name="Berriman M."/>
            <person name="Hyman R.W."/>
            <person name="Carlton J.M."/>
            <person name="Pain A."/>
            <person name="Nelson K.E."/>
            <person name="Bowman S."/>
            <person name="Paulsen I.T."/>
            <person name="James K.D."/>
            <person name="Eisen J.A."/>
            <person name="Rutherford K.M."/>
            <person name="Salzberg S.L."/>
            <person name="Craig A."/>
            <person name="Kyes S."/>
            <person name="Chan M.-S."/>
            <person name="Nene V."/>
            <person name="Shallom S.J."/>
            <person name="Suh B."/>
            <person name="Peterson J."/>
            <person name="Angiuoli S."/>
            <person name="Pertea M."/>
            <person name="Allen J."/>
            <person name="Selengut J."/>
            <person name="Haft D."/>
            <person name="Mather M.W."/>
            <person name="Vaidya A.B."/>
            <person name="Martin D.M.A."/>
            <person name="Fairlamb A.H."/>
            <person name="Fraunholz M.J."/>
            <person name="Roos D.S."/>
            <person name="Ralph S.A."/>
            <person name="McFadden G.I."/>
            <person name="Cummings L.M."/>
            <person name="Subramanian G.M."/>
            <person name="Mungall C."/>
            <person name="Venter J.C."/>
            <person name="Carucci D.J."/>
            <person name="Hoffman S.L."/>
            <person name="Newbold C."/>
            <person name="Davis R.W."/>
            <person name="Fraser C.M."/>
            <person name="Barrell B.G."/>
        </authorList>
    </citation>
    <scope>NUCLEOTIDE SEQUENCE [LARGE SCALE GENOMIC DNA]</scope>
    <source>
        <strain evidence="6">3D7</strain>
    </source>
</reference>
<reference evidence="6" key="2">
    <citation type="journal article" date="2002" name="Nature">
        <title>Sequence of Plasmodium falciparum chromosomes 1, 3-9 and 13.</title>
        <authorList>
            <person name="Hall N."/>
            <person name="Pain A."/>
            <person name="Berriman M."/>
            <person name="Churcher C.M."/>
            <person name="Harris B."/>
            <person name="Harris D."/>
            <person name="Mungall K.L."/>
            <person name="Bowman S."/>
            <person name="Atkin R."/>
            <person name="Baker S."/>
            <person name="Barron A."/>
            <person name="Brooks K."/>
            <person name="Buckee C.O."/>
            <person name="Burrows C."/>
            <person name="Cherevach I."/>
            <person name="Chillingworth C."/>
            <person name="Chillingworth T."/>
            <person name="Christodoulou Z."/>
            <person name="Clark L."/>
            <person name="Clark R."/>
            <person name="Corton C."/>
            <person name="Cronin A."/>
            <person name="Davies R.M."/>
            <person name="Davis P."/>
            <person name="Dear P."/>
            <person name="Dearden F."/>
            <person name="Doggett J."/>
            <person name="Feltwell T."/>
            <person name="Goble A."/>
            <person name="Goodhead I."/>
            <person name="Gwilliam R."/>
            <person name="Hamlin N."/>
            <person name="Hance Z."/>
            <person name="Harper D."/>
            <person name="Hauser H."/>
            <person name="Hornsby T."/>
            <person name="Holroyd S."/>
            <person name="Horrocks P."/>
            <person name="Humphray S."/>
            <person name="Jagels K."/>
            <person name="James K.D."/>
            <person name="Johnson D."/>
            <person name="Kerhornou A."/>
            <person name="Knights A."/>
            <person name="Konfortov B."/>
            <person name="Kyes S."/>
            <person name="Larke N."/>
            <person name="Lawson D."/>
            <person name="Lennard N."/>
            <person name="Line A."/>
            <person name="Maddison M."/>
            <person name="Mclean J."/>
            <person name="Mooney P."/>
            <person name="Moule S."/>
            <person name="Murphy L."/>
            <person name="Oliver K."/>
            <person name="Ormond D."/>
            <person name="Price C."/>
            <person name="Quail M.A."/>
            <person name="Rabbinowitsch E."/>
            <person name="Rajandream M.A."/>
            <person name="Rutter S."/>
            <person name="Rutherford K.M."/>
            <person name="Sanders M."/>
            <person name="Simmonds M."/>
            <person name="Seeger K."/>
            <person name="Sharp S."/>
            <person name="Smith R."/>
            <person name="Squares R."/>
            <person name="Squares S."/>
            <person name="Stevens K."/>
            <person name="Taylor K."/>
            <person name="Tivey A."/>
            <person name="Unwin L."/>
            <person name="Whitehead S."/>
            <person name="Woodward J.R."/>
            <person name="Sulston J.E."/>
            <person name="Craig A."/>
            <person name="Newbold C."/>
            <person name="Barrell B.G."/>
        </authorList>
    </citation>
    <scope>NUCLEOTIDE SEQUENCE [LARGE SCALE GENOMIC DNA]</scope>
    <source>
        <strain evidence="6">3D7</strain>
    </source>
</reference>
<reference evidence="4" key="3">
    <citation type="journal article" date="2012" name="Nucleic Acids Res.">
        <title>PfAlbas constitute a new eukaryotic DNA/RNA-binding protein family in malaria parasites.</title>
        <authorList>
            <person name="Chene A."/>
            <person name="Vembar S.S."/>
            <person name="Riviere L."/>
            <person name="Lopez-Rubio J.J."/>
            <person name="Claes A."/>
            <person name="Siegel T.N."/>
            <person name="Sakamoto H."/>
            <person name="Scheidig-Benatar C."/>
            <person name="Hernandez-Rivas R."/>
            <person name="Scherf A."/>
        </authorList>
    </citation>
    <scope>IDENTIFICATION BY MASS SPECTROMETRY</scope>
    <scope>FUNCTION</scope>
    <scope>SUBUNIT</scope>
    <scope>IDENTIFICATION IN THE TARE6-ASSOCIATED COMPLEX</scope>
    <scope>SUBCELLULAR LOCATION</scope>
    <scope>DEVELOPMENTAL STAGE</scope>
</reference>
<dbReference type="EMBL" id="AL844509">
    <property type="protein sequence ID" value="CAD52586.1"/>
    <property type="molecule type" value="Genomic_DNA"/>
</dbReference>
<dbReference type="RefSeq" id="XP_001350177.1">
    <property type="nucleotide sequence ID" value="XM_001350141.1"/>
</dbReference>
<dbReference type="SMR" id="Q8IDN4"/>
<dbReference type="IntAct" id="Q8IDN4">
    <property type="interactions" value="4"/>
</dbReference>
<dbReference type="STRING" id="36329.Q8IDN4"/>
<dbReference type="PaxDb" id="5833-MAL13P1.233"/>
<dbReference type="EnsemblProtists" id="CAD52586">
    <property type="protein sequence ID" value="CAD52586"/>
    <property type="gene ID" value="PF3D7_1346300"/>
</dbReference>
<dbReference type="GeneID" id="813792"/>
<dbReference type="KEGG" id="pfa:PF3D7_1346300"/>
<dbReference type="VEuPathDB" id="PlasmoDB:PF3D7_1346300"/>
<dbReference type="HOGENOM" id="CLU_1357032_0_0_1"/>
<dbReference type="InParanoid" id="Q8IDN4"/>
<dbReference type="OMA" id="YEKEHTI"/>
<dbReference type="OrthoDB" id="424402at2759"/>
<dbReference type="PhylomeDB" id="Q8IDN4"/>
<dbReference type="Proteomes" id="UP000001450">
    <property type="component" value="Chromosome 13"/>
</dbReference>
<dbReference type="GO" id="GO:0000781">
    <property type="term" value="C:chromosome, telomeric region"/>
    <property type="evidence" value="ECO:0007669"/>
    <property type="project" value="UniProtKB-SubCell"/>
</dbReference>
<dbReference type="GO" id="GO:0005737">
    <property type="term" value="C:cytoplasm"/>
    <property type="evidence" value="ECO:0000314"/>
    <property type="project" value="GeneDB"/>
</dbReference>
<dbReference type="GO" id="GO:0005634">
    <property type="term" value="C:nucleus"/>
    <property type="evidence" value="ECO:0000314"/>
    <property type="project" value="GeneDB"/>
</dbReference>
<dbReference type="GO" id="GO:0003677">
    <property type="term" value="F:DNA binding"/>
    <property type="evidence" value="ECO:0000314"/>
    <property type="project" value="GeneDB"/>
</dbReference>
<dbReference type="GO" id="GO:0003723">
    <property type="term" value="F:RNA binding"/>
    <property type="evidence" value="ECO:0000314"/>
    <property type="project" value="GeneDB"/>
</dbReference>
<dbReference type="Gene3D" id="3.30.110.20">
    <property type="entry name" value="Alba-like domain"/>
    <property type="match status" value="1"/>
</dbReference>
<dbReference type="InterPro" id="IPR036882">
    <property type="entry name" value="Alba-like_dom_sf"/>
</dbReference>
<dbReference type="InterPro" id="IPR051958">
    <property type="entry name" value="Alba-like_NAB"/>
</dbReference>
<dbReference type="InterPro" id="IPR002775">
    <property type="entry name" value="DNA/RNA-bd_Alba-like"/>
</dbReference>
<dbReference type="PANTHER" id="PTHR13516:SF4">
    <property type="entry name" value="FI09323P"/>
    <property type="match status" value="1"/>
</dbReference>
<dbReference type="PANTHER" id="PTHR13516">
    <property type="entry name" value="RIBONUCLEASE P SUBUNIT P25"/>
    <property type="match status" value="1"/>
</dbReference>
<dbReference type="Pfam" id="PF01918">
    <property type="entry name" value="Alba"/>
    <property type="match status" value="1"/>
</dbReference>
<dbReference type="SUPFAM" id="SSF82704">
    <property type="entry name" value="AlbA-like"/>
    <property type="match status" value="1"/>
</dbReference>
<feature type="chain" id="PRO_0000459507" description="DNA/RNA-binding protein ALBA2">
    <location>
        <begin position="1"/>
        <end position="211"/>
    </location>
</feature>
<feature type="region of interest" description="Disordered" evidence="1">
    <location>
        <begin position="84"/>
        <end position="121"/>
    </location>
</feature>
<feature type="compositionally biased region" description="Basic and acidic residues" evidence="1">
    <location>
        <begin position="84"/>
        <end position="99"/>
    </location>
</feature>
<feature type="compositionally biased region" description="Acidic residues" evidence="1">
    <location>
        <begin position="100"/>
        <end position="113"/>
    </location>
</feature>
<gene>
    <name evidence="4" type="primary">ALBA2</name>
    <name evidence="5" type="ORF">PF3D7_1346300</name>
</gene>
<comment type="function">
    <text evidence="2">Possesses DNA- and RNA-binding activities (PubMed:22167473). Binds to DNA with relaxed sequence specificity (PubMed:22167473). Associates with the subtelomeric TARE6 repeats (PubMed:22167473).</text>
</comment>
<comment type="subunit">
    <text evidence="2">Identified in a TARE6-associated complex consisting of over 30 proteins and including ALBA1, ALBA2 and ALBA4; the complex binds to the non-coding subtelomeric repeat region TARE6.</text>
</comment>
<comment type="subcellular location">
    <subcellularLocation>
        <location evidence="2">Nucleus</location>
    </subcellularLocation>
    <subcellularLocation>
        <location evidence="2">Chromosome</location>
        <location evidence="2">Telomere</location>
    </subcellularLocation>
    <subcellularLocation>
        <location evidence="2">Cytoplasm</location>
    </subcellularLocation>
    <text evidence="2">Localizes to the nucleus in the ring stages and expands to punctate loci in the cytoplasm during the trophozoite and schizont stages.</text>
</comment>
<comment type="developmental stage">
    <text evidence="2">Expressed throughout asexual blood stage development (at protein level).</text>
</comment>
<comment type="similarity">
    <text evidence="4">Belongs to the histone-like Alba family.</text>
</comment>
<evidence type="ECO:0000256" key="1">
    <source>
        <dbReference type="SAM" id="MobiDB-lite"/>
    </source>
</evidence>
<evidence type="ECO:0000269" key="2">
    <source>
    </source>
</evidence>
<evidence type="ECO:0000303" key="3">
    <source>
    </source>
</evidence>
<evidence type="ECO:0000305" key="4"/>
<evidence type="ECO:0000312" key="5">
    <source>
        <dbReference type="EMBL" id="CAD52586.1"/>
    </source>
</evidence>
<evidence type="ECO:0000312" key="6">
    <source>
        <dbReference type="Proteomes" id="UP000001450"/>
    </source>
</evidence>